<organism>
    <name type="scientific">Methanothermobacter marburgensis (strain ATCC BAA-927 / DSM 2133 / JCM 14651 / NBRC 100331 / OCM 82 / Marburg)</name>
    <name type="common">Methanobacterium thermoautotrophicum</name>
    <dbReference type="NCBI Taxonomy" id="79929"/>
    <lineage>
        <taxon>Archaea</taxon>
        <taxon>Methanobacteriati</taxon>
        <taxon>Methanobacteriota</taxon>
        <taxon>Methanomada group</taxon>
        <taxon>Methanobacteria</taxon>
        <taxon>Methanobacteriales</taxon>
        <taxon>Methanobacteriaceae</taxon>
        <taxon>Methanothermobacter</taxon>
    </lineage>
</organism>
<accession>P80908</accession>
<accession>D9PWT7</accession>
<name>VORB_METTM</name>
<evidence type="ECO:0000269" key="1">
    <source>
    </source>
</evidence>
<protein>
    <recommendedName>
        <fullName>Ketoisovalerate oxidoreductase subunit VorB</fullName>
        <shortName>VOR</shortName>
        <ecNumber>1.2.7.7</ecNumber>
    </recommendedName>
    <alternativeName>
        <fullName>2-oxoisovalerate ferredoxin reductase subunit beta</fullName>
    </alternativeName>
    <alternativeName>
        <fullName>2-oxoisovalerate oxidoreductase beta chain</fullName>
    </alternativeName>
</protein>
<feature type="initiator methionine" description="Removed" evidence="1">
    <location>
        <position position="1"/>
    </location>
</feature>
<feature type="chain" id="PRO_0000099955" description="Ketoisovalerate oxidoreductase subunit VorB">
    <location>
        <begin position="2"/>
        <end position="352"/>
    </location>
</feature>
<proteinExistence type="evidence at protein level"/>
<keyword id="KW-0903">Direct protein sequencing</keyword>
<keyword id="KW-0560">Oxidoreductase</keyword>
<gene>
    <name type="primary">vorB</name>
    <name type="ordered locus">MTBMA_c10910</name>
</gene>
<dbReference type="EC" id="1.2.7.7"/>
<dbReference type="EMBL" id="CP001710">
    <property type="protein sequence ID" value="ADL58685.1"/>
    <property type="molecule type" value="Genomic_DNA"/>
</dbReference>
<dbReference type="RefSeq" id="WP_013295908.1">
    <property type="nucleotide sequence ID" value="NC_014408.1"/>
</dbReference>
<dbReference type="SMR" id="P80908"/>
<dbReference type="STRING" id="79929.MTBMA_c10910"/>
<dbReference type="PaxDb" id="79929-MTBMA_c10910"/>
<dbReference type="GeneID" id="77399867"/>
<dbReference type="GeneID" id="9704799"/>
<dbReference type="KEGG" id="mmg:MTBMA_c10910"/>
<dbReference type="PATRIC" id="fig|79929.8.peg.1069"/>
<dbReference type="HOGENOM" id="CLU_017038_0_0_2"/>
<dbReference type="OrthoDB" id="31112at2157"/>
<dbReference type="Proteomes" id="UP000000345">
    <property type="component" value="Chromosome"/>
</dbReference>
<dbReference type="GO" id="GO:0043807">
    <property type="term" value="F:3-methyl-2-oxobutanoate dehydrogenase (ferredoxin) activity"/>
    <property type="evidence" value="ECO:0007669"/>
    <property type="project" value="UniProtKB-EC"/>
</dbReference>
<dbReference type="GO" id="GO:0006082">
    <property type="term" value="P:organic acid metabolic process"/>
    <property type="evidence" value="ECO:0007669"/>
    <property type="project" value="UniProtKB-ARBA"/>
</dbReference>
<dbReference type="GO" id="GO:0044272">
    <property type="term" value="P:sulfur compound biosynthetic process"/>
    <property type="evidence" value="ECO:0007669"/>
    <property type="project" value="UniProtKB-ARBA"/>
</dbReference>
<dbReference type="CDD" id="cd07034">
    <property type="entry name" value="TPP_PYR_PFOR_IOR-alpha_like"/>
    <property type="match status" value="1"/>
</dbReference>
<dbReference type="Gene3D" id="3.40.50.920">
    <property type="match status" value="1"/>
</dbReference>
<dbReference type="Gene3D" id="3.40.50.970">
    <property type="match status" value="1"/>
</dbReference>
<dbReference type="InterPro" id="IPR052368">
    <property type="entry name" value="2-oxoacid_oxidoreductase"/>
</dbReference>
<dbReference type="InterPro" id="IPR033412">
    <property type="entry name" value="PFOR_II"/>
</dbReference>
<dbReference type="InterPro" id="IPR002880">
    <property type="entry name" value="Pyrv_Fd/Flavodoxin_OxRdtase_N"/>
</dbReference>
<dbReference type="InterPro" id="IPR029061">
    <property type="entry name" value="THDP-binding"/>
</dbReference>
<dbReference type="InterPro" id="IPR009014">
    <property type="entry name" value="Transketo_C/PFOR_II"/>
</dbReference>
<dbReference type="NCBIfam" id="NF005507">
    <property type="entry name" value="PRK07119.1"/>
    <property type="match status" value="1"/>
</dbReference>
<dbReference type="PANTHER" id="PTHR43088:SF1">
    <property type="entry name" value="SUBUNIT OF PYRUVATE:FLAVODOXIN OXIDOREDUCTASE"/>
    <property type="match status" value="1"/>
</dbReference>
<dbReference type="PANTHER" id="PTHR43088">
    <property type="entry name" value="SUBUNIT OF PYRUVATE:FLAVODOXIN OXIDOREDUCTASE-RELATED"/>
    <property type="match status" value="1"/>
</dbReference>
<dbReference type="Pfam" id="PF17147">
    <property type="entry name" value="PFOR_II"/>
    <property type="match status" value="1"/>
</dbReference>
<dbReference type="Pfam" id="PF01855">
    <property type="entry name" value="POR_N"/>
    <property type="match status" value="1"/>
</dbReference>
<dbReference type="SUPFAM" id="SSF52518">
    <property type="entry name" value="Thiamin diphosphate-binding fold (THDP-binding)"/>
    <property type="match status" value="1"/>
</dbReference>
<dbReference type="SUPFAM" id="SSF52922">
    <property type="entry name" value="TK C-terminal domain-like"/>
    <property type="match status" value="1"/>
</dbReference>
<sequence length="352" mass="38549">MATQMVKGNTAVIIGAMYAGCDCYFGYPITPASEILHEASRYFPLVGRKFVQAESEEAAINMVYGAAAAGHRVMTASSGPGMSLKQEGISFLAGAELPAVIVDVMRAGPGLGNIGPEQADYNQLVKGGGHGNYRNIVLAPNSVQEMCDLTMDAFELADKYRNPVIILADAVLGQMAEPLRFPERAVEHRPDTSWAVCGSRETMKNLVTSIFLDFDELEEFNFYLQEKYAAVEENEVRYEEYMVEDAEIVLVAYGISSRVAKSAVDTARADGIKVGLLRPITLFPFPSERIRELAEGGCTFISVEMSSGQMREDIKMASGCRDVELVNRMGGNLIELRDILRKIREIAGESND</sequence>
<reference key="1">
    <citation type="journal article" date="2010" name="J. Bacteriol.">
        <title>Complete genome sequence of Methanothermobacter marburgensis, a methanoarchaeon model organism.</title>
        <authorList>
            <person name="Liesegang H."/>
            <person name="Kaster A.K."/>
            <person name="Wiezer A."/>
            <person name="Goenrich M."/>
            <person name="Wollherr A."/>
            <person name="Seedorf H."/>
            <person name="Gottschalk G."/>
            <person name="Thauer R.K."/>
        </authorList>
    </citation>
    <scope>NUCLEOTIDE SEQUENCE [LARGE SCALE GENOMIC DNA]</scope>
    <source>
        <strain>ATCC BAA-927 / DSM 2133 / JCM 14651 / NBRC 100331 / OCM 82 / Marburg</strain>
    </source>
</reference>
<reference key="2">
    <citation type="journal article" date="1997" name="Eur. J. Biochem.">
        <title>Structures and functions of four anabolic 2-oxoacid oxidoreductases in Methanobacterium thermoautotrophicum.</title>
        <authorList>
            <person name="Tersteegen A."/>
            <person name="Linder D."/>
            <person name="Thauer R.K."/>
            <person name="Hedderich R."/>
        </authorList>
    </citation>
    <scope>PROTEIN SEQUENCE OF 2-36</scope>
    <scope>BIOPHYSICOCHEMICAL PROPERTIES</scope>
    <scope>SUBUNIT</scope>
    <source>
        <strain>ATCC BAA-927 / DSM 2133 / JCM 14651 / NBRC 100331 / OCM 82 / Marburg</strain>
    </source>
</reference>
<comment type="catalytic activity">
    <reaction>
        <text>3-methyl-2-oxobutanoate + 2 oxidized [2Fe-2S]-[ferredoxin] + CoA = 2-methylpropanoyl-CoA + 2 reduced [2Fe-2S]-[ferredoxin] + CO2 + H(+)</text>
        <dbReference type="Rhea" id="RHEA:11712"/>
        <dbReference type="Rhea" id="RHEA-COMP:10000"/>
        <dbReference type="Rhea" id="RHEA-COMP:10001"/>
        <dbReference type="ChEBI" id="CHEBI:11851"/>
        <dbReference type="ChEBI" id="CHEBI:15378"/>
        <dbReference type="ChEBI" id="CHEBI:16526"/>
        <dbReference type="ChEBI" id="CHEBI:33737"/>
        <dbReference type="ChEBI" id="CHEBI:33738"/>
        <dbReference type="ChEBI" id="CHEBI:57287"/>
        <dbReference type="ChEBI" id="CHEBI:57338"/>
        <dbReference type="EC" id="1.2.7.7"/>
    </reaction>
</comment>
<comment type="biophysicochemical properties">
    <phDependence>
        <text evidence="1">Optimum pH is 9.7.</text>
    </phDependence>
    <temperatureDependence>
        <text evidence="1">Optimum temperature is 75 degrees Celsius.</text>
    </temperatureDependence>
</comment>
<comment type="subunit">
    <text evidence="1">Heterotrimer of the VorA, VorB and VorC subunits.</text>
</comment>